<evidence type="ECO:0000255" key="1">
    <source>
        <dbReference type="HAMAP-Rule" id="MF_00181"/>
    </source>
</evidence>
<keyword id="KW-0031">Aminopeptidase</keyword>
<keyword id="KW-0963">Cytoplasm</keyword>
<keyword id="KW-0378">Hydrolase</keyword>
<keyword id="KW-0464">Manganese</keyword>
<keyword id="KW-0479">Metal-binding</keyword>
<keyword id="KW-0645">Protease</keyword>
<keyword id="KW-1185">Reference proteome</keyword>
<sequence>MDLRFQRGPSGEWKASVVLAFAFKGEDIRKQAQALIDVAPWLDIAPALNDFTGAAGETGVLYGHPKIAIPRIILCGLGERESYTAETLRKSVAAAMQKCRELKLETVGIDVQTLAGLPGDAARNVEEAVVSAYLPLYTYERFRTTRKEPLFTPSWISLFFAEDIDSTLRDAARRGESAAAGIFLTRDLVNGPANLVTPSFLEEQARKLAARYGFTVRSMTRQEIAAAGMGAFESVFKGAVEDARLLAIEYCPRGMEKEQPLVFVGKGVTFDTGGISLKPSANMGDMKSDMGGAGAIFGLFETIGQMGGQAGAASAGFTRRVIGVMPCTENMPDGQATRPGDVVTSLSGQTIEIINTDAEGRLILCDAMTWAQREYDPAVMVDLATLTGACLIALGTDVAAVFATDDALADTVRTRGGDVGDLYWRLPLWDRYFEDLKSDVADMKNVGGREGGTINAALFLKQFVDEGRRWAHLDIAGPAYRNKKSPLCPFGATGFAVRTLMQLALHGVPEPSGD</sequence>
<organism>
    <name type="scientific">Oleidesulfovibrio alaskensis (strain ATCC BAA-1058 / DSM 17464 / G20)</name>
    <name type="common">Desulfovibrio alaskensis</name>
    <dbReference type="NCBI Taxonomy" id="207559"/>
    <lineage>
        <taxon>Bacteria</taxon>
        <taxon>Pseudomonadati</taxon>
        <taxon>Thermodesulfobacteriota</taxon>
        <taxon>Desulfovibrionia</taxon>
        <taxon>Desulfovibrionales</taxon>
        <taxon>Desulfovibrionaceae</taxon>
        <taxon>Oleidesulfovibrio</taxon>
    </lineage>
</organism>
<comment type="function">
    <text evidence="1">Presumably involved in the processing and regular turnover of intracellular proteins. Catalyzes the removal of unsubstituted N-terminal amino acids from various peptides.</text>
</comment>
<comment type="catalytic activity">
    <reaction evidence="1">
        <text>Release of an N-terminal amino acid, Xaa-|-Yaa-, in which Xaa is preferably Leu, but may be other amino acids including Pro although not Arg or Lys, and Yaa may be Pro. Amino acid amides and methyl esters are also readily hydrolyzed, but rates on arylamides are exceedingly low.</text>
        <dbReference type="EC" id="3.4.11.1"/>
    </reaction>
</comment>
<comment type="catalytic activity">
    <reaction evidence="1">
        <text>Release of an N-terminal amino acid, preferentially leucine, but not glutamic or aspartic acids.</text>
        <dbReference type="EC" id="3.4.11.10"/>
    </reaction>
</comment>
<comment type="cofactor">
    <cofactor evidence="1">
        <name>Mn(2+)</name>
        <dbReference type="ChEBI" id="CHEBI:29035"/>
    </cofactor>
    <text evidence="1">Binds 2 manganese ions per subunit.</text>
</comment>
<comment type="subcellular location">
    <subcellularLocation>
        <location evidence="1">Cytoplasm</location>
    </subcellularLocation>
</comment>
<comment type="similarity">
    <text evidence="1">Belongs to the peptidase M17 family.</text>
</comment>
<reference key="1">
    <citation type="journal article" date="2011" name="J. Bacteriol.">
        <title>Complete genome sequence and updated annotation of Desulfovibrio alaskensis G20.</title>
        <authorList>
            <person name="Hauser L.J."/>
            <person name="Land M.L."/>
            <person name="Brown S.D."/>
            <person name="Larimer F."/>
            <person name="Keller K.L."/>
            <person name="Rapp-Giles B.J."/>
            <person name="Price M.N."/>
            <person name="Lin M."/>
            <person name="Bruce D.C."/>
            <person name="Detter J.C."/>
            <person name="Tapia R."/>
            <person name="Han C.S."/>
            <person name="Goodwin L.A."/>
            <person name="Cheng J.F."/>
            <person name="Pitluck S."/>
            <person name="Copeland A."/>
            <person name="Lucas S."/>
            <person name="Nolan M."/>
            <person name="Lapidus A.L."/>
            <person name="Palumbo A.V."/>
            <person name="Wall J.D."/>
        </authorList>
    </citation>
    <scope>NUCLEOTIDE SEQUENCE [LARGE SCALE GENOMIC DNA]</scope>
    <source>
        <strain>ATCC BAA-1058 / DSM 17464 / G20</strain>
    </source>
</reference>
<gene>
    <name evidence="1" type="primary">pepA</name>
    <name type="ordered locus">Dde_0568</name>
</gene>
<proteinExistence type="inferred from homology"/>
<feature type="chain" id="PRO_1000019913" description="Probable cytosol aminopeptidase">
    <location>
        <begin position="1"/>
        <end position="514"/>
    </location>
</feature>
<feature type="active site" evidence="1">
    <location>
        <position position="278"/>
    </location>
</feature>
<feature type="active site" evidence="1">
    <location>
        <position position="361"/>
    </location>
</feature>
<feature type="binding site" evidence="1">
    <location>
        <position position="266"/>
    </location>
    <ligand>
        <name>Mn(2+)</name>
        <dbReference type="ChEBI" id="CHEBI:29035"/>
        <label>2</label>
    </ligand>
</feature>
<feature type="binding site" evidence="1">
    <location>
        <position position="271"/>
    </location>
    <ligand>
        <name>Mn(2+)</name>
        <dbReference type="ChEBI" id="CHEBI:29035"/>
        <label>1</label>
    </ligand>
</feature>
<feature type="binding site" evidence="1">
    <location>
        <position position="271"/>
    </location>
    <ligand>
        <name>Mn(2+)</name>
        <dbReference type="ChEBI" id="CHEBI:29035"/>
        <label>2</label>
    </ligand>
</feature>
<feature type="binding site" evidence="1">
    <location>
        <position position="289"/>
    </location>
    <ligand>
        <name>Mn(2+)</name>
        <dbReference type="ChEBI" id="CHEBI:29035"/>
        <label>2</label>
    </ligand>
</feature>
<feature type="binding site" evidence="1">
    <location>
        <position position="357"/>
    </location>
    <ligand>
        <name>Mn(2+)</name>
        <dbReference type="ChEBI" id="CHEBI:29035"/>
        <label>1</label>
    </ligand>
</feature>
<feature type="binding site" evidence="1">
    <location>
        <position position="359"/>
    </location>
    <ligand>
        <name>Mn(2+)</name>
        <dbReference type="ChEBI" id="CHEBI:29035"/>
        <label>1</label>
    </ligand>
</feature>
<feature type="binding site" evidence="1">
    <location>
        <position position="359"/>
    </location>
    <ligand>
        <name>Mn(2+)</name>
        <dbReference type="ChEBI" id="CHEBI:29035"/>
        <label>2</label>
    </ligand>
</feature>
<dbReference type="EC" id="3.4.11.1" evidence="1"/>
<dbReference type="EC" id="3.4.11.10" evidence="1"/>
<dbReference type="EMBL" id="CP000112">
    <property type="protein sequence ID" value="ABB37369.1"/>
    <property type="molecule type" value="Genomic_DNA"/>
</dbReference>
<dbReference type="RefSeq" id="WP_011366683.1">
    <property type="nucleotide sequence ID" value="NC_007519.1"/>
</dbReference>
<dbReference type="SMR" id="Q315M7"/>
<dbReference type="STRING" id="207559.Dde_0568"/>
<dbReference type="KEGG" id="dde:Dde_0568"/>
<dbReference type="eggNOG" id="COG0260">
    <property type="taxonomic scope" value="Bacteria"/>
</dbReference>
<dbReference type="HOGENOM" id="CLU_013734_2_2_7"/>
<dbReference type="Proteomes" id="UP000002710">
    <property type="component" value="Chromosome"/>
</dbReference>
<dbReference type="GO" id="GO:0005737">
    <property type="term" value="C:cytoplasm"/>
    <property type="evidence" value="ECO:0007669"/>
    <property type="project" value="UniProtKB-SubCell"/>
</dbReference>
<dbReference type="GO" id="GO:0030145">
    <property type="term" value="F:manganese ion binding"/>
    <property type="evidence" value="ECO:0007669"/>
    <property type="project" value="UniProtKB-UniRule"/>
</dbReference>
<dbReference type="GO" id="GO:0070006">
    <property type="term" value="F:metalloaminopeptidase activity"/>
    <property type="evidence" value="ECO:0007669"/>
    <property type="project" value="InterPro"/>
</dbReference>
<dbReference type="GO" id="GO:0006508">
    <property type="term" value="P:proteolysis"/>
    <property type="evidence" value="ECO:0007669"/>
    <property type="project" value="UniProtKB-KW"/>
</dbReference>
<dbReference type="CDD" id="cd00433">
    <property type="entry name" value="Peptidase_M17"/>
    <property type="match status" value="1"/>
</dbReference>
<dbReference type="Gene3D" id="3.40.220.10">
    <property type="entry name" value="Leucine Aminopeptidase, subunit E, domain 1"/>
    <property type="match status" value="1"/>
</dbReference>
<dbReference type="Gene3D" id="3.40.630.10">
    <property type="entry name" value="Zn peptidases"/>
    <property type="match status" value="1"/>
</dbReference>
<dbReference type="HAMAP" id="MF_00181">
    <property type="entry name" value="Cytosol_peptidase_M17"/>
    <property type="match status" value="1"/>
</dbReference>
<dbReference type="InterPro" id="IPR011356">
    <property type="entry name" value="Leucine_aapep/pepB"/>
</dbReference>
<dbReference type="InterPro" id="IPR043472">
    <property type="entry name" value="Macro_dom-like"/>
</dbReference>
<dbReference type="InterPro" id="IPR000819">
    <property type="entry name" value="Peptidase_M17_C"/>
</dbReference>
<dbReference type="InterPro" id="IPR023042">
    <property type="entry name" value="Peptidase_M17_leu_NH2_pept"/>
</dbReference>
<dbReference type="InterPro" id="IPR008283">
    <property type="entry name" value="Peptidase_M17_N"/>
</dbReference>
<dbReference type="NCBIfam" id="NF002074">
    <property type="entry name" value="PRK00913.1-4"/>
    <property type="match status" value="1"/>
</dbReference>
<dbReference type="PANTHER" id="PTHR11963:SF23">
    <property type="entry name" value="CYTOSOL AMINOPEPTIDASE"/>
    <property type="match status" value="1"/>
</dbReference>
<dbReference type="PANTHER" id="PTHR11963">
    <property type="entry name" value="LEUCINE AMINOPEPTIDASE-RELATED"/>
    <property type="match status" value="1"/>
</dbReference>
<dbReference type="Pfam" id="PF00883">
    <property type="entry name" value="Peptidase_M17"/>
    <property type="match status" value="1"/>
</dbReference>
<dbReference type="Pfam" id="PF02789">
    <property type="entry name" value="Peptidase_M17_N"/>
    <property type="match status" value="1"/>
</dbReference>
<dbReference type="PRINTS" id="PR00481">
    <property type="entry name" value="LAMNOPPTDASE"/>
</dbReference>
<dbReference type="SUPFAM" id="SSF52949">
    <property type="entry name" value="Macro domain-like"/>
    <property type="match status" value="1"/>
</dbReference>
<dbReference type="SUPFAM" id="SSF53187">
    <property type="entry name" value="Zn-dependent exopeptidases"/>
    <property type="match status" value="1"/>
</dbReference>
<dbReference type="PROSITE" id="PS00631">
    <property type="entry name" value="CYTOSOL_AP"/>
    <property type="match status" value="1"/>
</dbReference>
<accession>Q315M7</accession>
<name>AMPA_OLEA2</name>
<protein>
    <recommendedName>
        <fullName evidence="1">Probable cytosol aminopeptidase</fullName>
        <ecNumber evidence="1">3.4.11.1</ecNumber>
    </recommendedName>
    <alternativeName>
        <fullName evidence="1">Leucine aminopeptidase</fullName>
        <shortName evidence="1">LAP</shortName>
        <ecNumber evidence="1">3.4.11.10</ecNumber>
    </alternativeName>
    <alternativeName>
        <fullName evidence="1">Leucyl aminopeptidase</fullName>
    </alternativeName>
</protein>